<name>METL2_ARATH</name>
<comment type="function">
    <text evidence="1">Probable methyltransferase.</text>
</comment>
<comment type="similarity">
    <text evidence="2">Belongs to the MT-A70-like family.</text>
</comment>
<comment type="sequence caution" evidence="4">
    <conflict type="erroneous gene model prediction">
        <sequence resource="EMBL-CDS" id="AAF79421"/>
    </conflict>
</comment>
<comment type="sequence caution" evidence="4">
    <conflict type="erroneous initiation">
        <sequence resource="EMBL-CDS" id="BAC42388"/>
    </conflict>
</comment>
<dbReference type="EC" id="2.1.1.-"/>
<dbReference type="EMBL" id="AC025808">
    <property type="protein sequence ID" value="AAF79421.1"/>
    <property type="status" value="ALT_SEQ"/>
    <property type="molecule type" value="Genomic_DNA"/>
</dbReference>
<dbReference type="EMBL" id="CP002684">
    <property type="protein sequence ID" value="AEE29833.1"/>
    <property type="molecule type" value="Genomic_DNA"/>
</dbReference>
<dbReference type="EMBL" id="AY084952">
    <property type="protein sequence ID" value="AAM61513.1"/>
    <property type="molecule type" value="mRNA"/>
</dbReference>
<dbReference type="EMBL" id="AK117739">
    <property type="protein sequence ID" value="BAC42388.1"/>
    <property type="status" value="ALT_INIT"/>
    <property type="molecule type" value="mRNA"/>
</dbReference>
<dbReference type="RefSeq" id="NP_564080.1">
    <property type="nucleotide sequence ID" value="NM_101791.3"/>
</dbReference>
<dbReference type="PDB" id="7CV6">
    <property type="method" value="X-ray"/>
    <property type="resolution" value="3.01 A"/>
    <property type="chains" value="B=1-414"/>
</dbReference>
<dbReference type="PDB" id="7CV7">
    <property type="method" value="X-ray"/>
    <property type="resolution" value="2.30 A"/>
    <property type="chains" value="A/B=1-414"/>
</dbReference>
<dbReference type="PDB" id="7CV8">
    <property type="method" value="X-ray"/>
    <property type="resolution" value="2.37 A"/>
    <property type="chains" value="A=1-414"/>
</dbReference>
<dbReference type="PDB" id="7CV9">
    <property type="method" value="X-ray"/>
    <property type="resolution" value="2.46 A"/>
    <property type="chains" value="A/C=1-414"/>
</dbReference>
<dbReference type="PDB" id="7CVA">
    <property type="method" value="X-ray"/>
    <property type="resolution" value="2.50 A"/>
    <property type="chains" value="A/B=1-414"/>
</dbReference>
<dbReference type="PDB" id="7DPE">
    <property type="method" value="X-ray"/>
    <property type="resolution" value="2.75 A"/>
    <property type="chains" value="A=1-414"/>
</dbReference>
<dbReference type="PDBsum" id="7CV6"/>
<dbReference type="PDBsum" id="7CV7"/>
<dbReference type="PDBsum" id="7CV8"/>
<dbReference type="PDBsum" id="7CV9"/>
<dbReference type="PDBsum" id="7CVA"/>
<dbReference type="PDBsum" id="7DPE"/>
<dbReference type="SMR" id="Q8LFA9"/>
<dbReference type="FunCoup" id="Q8LFA9">
    <property type="interactions" value="1234"/>
</dbReference>
<dbReference type="STRING" id="3702.Q8LFA9"/>
<dbReference type="PaxDb" id="3702-AT1G19340.1"/>
<dbReference type="ProteomicsDB" id="250618"/>
<dbReference type="DNASU" id="838516"/>
<dbReference type="EnsemblPlants" id="AT1G19340.1">
    <property type="protein sequence ID" value="AT1G19340.1"/>
    <property type="gene ID" value="AT1G19340"/>
</dbReference>
<dbReference type="GeneID" id="838516"/>
<dbReference type="Gramene" id="AT1G19340.1">
    <property type="protein sequence ID" value="AT1G19340.1"/>
    <property type="gene ID" value="AT1G19340"/>
</dbReference>
<dbReference type="KEGG" id="ath:AT1G19340"/>
<dbReference type="Araport" id="AT1G19340"/>
<dbReference type="TAIR" id="AT1G19340"/>
<dbReference type="eggNOG" id="KOG2356">
    <property type="taxonomic scope" value="Eukaryota"/>
</dbReference>
<dbReference type="HOGENOM" id="CLU_027091_3_1_1"/>
<dbReference type="InParanoid" id="Q8LFA9"/>
<dbReference type="OMA" id="EPLRFQD"/>
<dbReference type="PRO" id="PR:Q8LFA9"/>
<dbReference type="Proteomes" id="UP000006548">
    <property type="component" value="Chromosome 1"/>
</dbReference>
<dbReference type="ExpressionAtlas" id="Q8LFA9">
    <property type="expression patterns" value="baseline and differential"/>
</dbReference>
<dbReference type="GO" id="GO:0008168">
    <property type="term" value="F:methyltransferase activity"/>
    <property type="evidence" value="ECO:0007669"/>
    <property type="project" value="UniProtKB-KW"/>
</dbReference>
<dbReference type="GO" id="GO:0003676">
    <property type="term" value="F:nucleic acid binding"/>
    <property type="evidence" value="ECO:0007669"/>
    <property type="project" value="InterPro"/>
</dbReference>
<dbReference type="GO" id="GO:0032259">
    <property type="term" value="P:methylation"/>
    <property type="evidence" value="ECO:0007669"/>
    <property type="project" value="UniProtKB-KW"/>
</dbReference>
<dbReference type="InterPro" id="IPR002052">
    <property type="entry name" value="DNA_methylase_N6_adenine_CS"/>
</dbReference>
<dbReference type="InterPro" id="IPR007757">
    <property type="entry name" value="MT-A70-like"/>
</dbReference>
<dbReference type="InterPro" id="IPR029063">
    <property type="entry name" value="SAM-dependent_MTases_sf"/>
</dbReference>
<dbReference type="PANTHER" id="PTHR12829:SF4">
    <property type="entry name" value="N(6)-ADENINE-SPECIFIC METHYLTRANSFERASE METTL4"/>
    <property type="match status" value="1"/>
</dbReference>
<dbReference type="PANTHER" id="PTHR12829">
    <property type="entry name" value="N6-ADENOSINE-METHYLTRANSFERASE"/>
    <property type="match status" value="1"/>
</dbReference>
<dbReference type="Pfam" id="PF05063">
    <property type="entry name" value="MT-A70"/>
    <property type="match status" value="1"/>
</dbReference>
<dbReference type="SUPFAM" id="SSF53335">
    <property type="entry name" value="S-adenosyl-L-methionine-dependent methyltransferases"/>
    <property type="match status" value="1"/>
</dbReference>
<dbReference type="PROSITE" id="PS51143">
    <property type="entry name" value="MT_A70"/>
    <property type="match status" value="1"/>
</dbReference>
<dbReference type="PROSITE" id="PS00092">
    <property type="entry name" value="N6_MTASE"/>
    <property type="match status" value="1"/>
</dbReference>
<proteinExistence type="evidence at protein level"/>
<gene>
    <name type="ordered locus">At1g19340</name>
    <name type="ORF">F18O14.6</name>
</gene>
<keyword id="KW-0002">3D-structure</keyword>
<keyword id="KW-0489">Methyltransferase</keyword>
<keyword id="KW-1185">Reference proteome</keyword>
<keyword id="KW-0808">Transferase</keyword>
<feature type="chain" id="PRO_0000260074" description="Methyltransferase-like protein 2">
    <location>
        <begin position="1"/>
        <end position="414"/>
    </location>
</feature>
<feature type="region of interest" description="Disordered" evidence="3">
    <location>
        <begin position="56"/>
        <end position="77"/>
    </location>
</feature>
<feature type="sequence conflict" description="In Ref. 3; AAM61513 and 4; BAC42388." evidence="4" ref="3 4">
    <original>H</original>
    <variation>Q</variation>
    <location>
        <position position="59"/>
    </location>
</feature>
<feature type="helix" evidence="5">
    <location>
        <begin position="3"/>
        <end position="13"/>
    </location>
</feature>
<feature type="strand" evidence="5">
    <location>
        <begin position="14"/>
        <end position="17"/>
    </location>
</feature>
<feature type="turn" evidence="8">
    <location>
        <begin position="19"/>
        <end position="22"/>
    </location>
</feature>
<feature type="strand" evidence="5">
    <location>
        <begin position="23"/>
        <end position="26"/>
    </location>
</feature>
<feature type="helix" evidence="5">
    <location>
        <begin position="28"/>
        <end position="33"/>
    </location>
</feature>
<feature type="strand" evidence="5">
    <location>
        <begin position="37"/>
        <end position="40"/>
    </location>
</feature>
<feature type="helix" evidence="5">
    <location>
        <begin position="43"/>
        <end position="46"/>
    </location>
</feature>
<feature type="helix" evidence="6">
    <location>
        <begin position="48"/>
        <end position="51"/>
    </location>
</feature>
<feature type="turn" evidence="7">
    <location>
        <begin position="82"/>
        <end position="84"/>
    </location>
</feature>
<feature type="helix" evidence="5">
    <location>
        <begin position="87"/>
        <end position="106"/>
    </location>
</feature>
<feature type="helix" evidence="5">
    <location>
        <begin position="109"/>
        <end position="117"/>
    </location>
</feature>
<feature type="helix" evidence="5">
    <location>
        <begin position="131"/>
        <end position="133"/>
    </location>
</feature>
<feature type="helix" evidence="5">
    <location>
        <begin position="140"/>
        <end position="144"/>
    </location>
</feature>
<feature type="helix" evidence="5">
    <location>
        <begin position="149"/>
        <end position="151"/>
    </location>
</feature>
<feature type="strand" evidence="5">
    <location>
        <begin position="153"/>
        <end position="157"/>
    </location>
</feature>
<feature type="strand" evidence="5">
    <location>
        <begin position="172"/>
        <end position="176"/>
    </location>
</feature>
<feature type="strand" evidence="5">
    <location>
        <begin position="178"/>
        <end position="184"/>
    </location>
</feature>
<feature type="strand" evidence="5">
    <location>
        <begin position="186"/>
        <end position="188"/>
    </location>
</feature>
<feature type="strand" evidence="5">
    <location>
        <begin position="190"/>
        <end position="194"/>
    </location>
</feature>
<feature type="strand" evidence="5">
    <location>
        <begin position="197"/>
        <end position="201"/>
    </location>
</feature>
<feature type="strand" evidence="5">
    <location>
        <begin position="205"/>
        <end position="209"/>
    </location>
</feature>
<feature type="helix" evidence="5">
    <location>
        <begin position="212"/>
        <end position="218"/>
    </location>
</feature>
<feature type="strand" evidence="5">
    <location>
        <begin position="222"/>
        <end position="224"/>
    </location>
</feature>
<feature type="strand" evidence="5">
    <location>
        <begin position="227"/>
        <end position="232"/>
    </location>
</feature>
<feature type="strand" evidence="7">
    <location>
        <begin position="245"/>
        <end position="247"/>
    </location>
</feature>
<feature type="helix" evidence="5">
    <location>
        <begin position="252"/>
        <end position="257"/>
    </location>
</feature>
<feature type="helix" evidence="5">
    <location>
        <begin position="260"/>
        <end position="263"/>
    </location>
</feature>
<feature type="strand" evidence="5">
    <location>
        <begin position="269"/>
        <end position="275"/>
    </location>
</feature>
<feature type="helix" evidence="5">
    <location>
        <begin position="279"/>
        <end position="287"/>
    </location>
</feature>
<feature type="helix" evidence="5">
    <location>
        <begin position="289"/>
        <end position="293"/>
    </location>
</feature>
<feature type="strand" evidence="5">
    <location>
        <begin position="296"/>
        <end position="306"/>
    </location>
</feature>
<feature type="strand" evidence="5">
    <location>
        <begin position="310"/>
        <end position="314"/>
    </location>
</feature>
<feature type="strand" evidence="7">
    <location>
        <begin position="319"/>
        <end position="321"/>
    </location>
</feature>
<feature type="strand" evidence="5">
    <location>
        <begin position="323"/>
        <end position="332"/>
    </location>
</feature>
<feature type="strand" evidence="5">
    <location>
        <begin position="352"/>
        <end position="356"/>
    </location>
</feature>
<feature type="helix" evidence="7">
    <location>
        <begin position="360"/>
        <end position="362"/>
    </location>
</feature>
<feature type="helix" evidence="5">
    <location>
        <begin position="368"/>
        <end position="371"/>
    </location>
</feature>
<feature type="helix" evidence="5">
    <location>
        <begin position="372"/>
        <end position="374"/>
    </location>
</feature>
<feature type="strand" evidence="5">
    <location>
        <begin position="378"/>
        <end position="380"/>
    </location>
</feature>
<feature type="strand" evidence="5">
    <location>
        <begin position="383"/>
        <end position="386"/>
    </location>
</feature>
<feature type="strand" evidence="5">
    <location>
        <begin position="395"/>
        <end position="400"/>
    </location>
</feature>
<feature type="helix" evidence="5">
    <location>
        <begin position="404"/>
        <end position="406"/>
    </location>
</feature>
<feature type="helix" evidence="5">
    <location>
        <begin position="408"/>
        <end position="410"/>
    </location>
</feature>
<feature type="strand" evidence="6">
    <location>
        <begin position="411"/>
        <end position="413"/>
    </location>
</feature>
<organism>
    <name type="scientific">Arabidopsis thaliana</name>
    <name type="common">Mouse-ear cress</name>
    <dbReference type="NCBI Taxonomy" id="3702"/>
    <lineage>
        <taxon>Eukaryota</taxon>
        <taxon>Viridiplantae</taxon>
        <taxon>Streptophyta</taxon>
        <taxon>Embryophyta</taxon>
        <taxon>Tracheophyta</taxon>
        <taxon>Spermatophyta</taxon>
        <taxon>Magnoliopsida</taxon>
        <taxon>eudicotyledons</taxon>
        <taxon>Gunneridae</taxon>
        <taxon>Pentapetalae</taxon>
        <taxon>rosids</taxon>
        <taxon>malvids</taxon>
        <taxon>Brassicales</taxon>
        <taxon>Brassicaceae</taxon>
        <taxon>Camelineae</taxon>
        <taxon>Arabidopsis</taxon>
    </lineage>
</organism>
<evidence type="ECO:0000250" key="1"/>
<evidence type="ECO:0000255" key="2">
    <source>
        <dbReference type="PROSITE-ProRule" id="PRU00489"/>
    </source>
</evidence>
<evidence type="ECO:0000256" key="3">
    <source>
        <dbReference type="SAM" id="MobiDB-lite"/>
    </source>
</evidence>
<evidence type="ECO:0000305" key="4"/>
<evidence type="ECO:0007829" key="5">
    <source>
        <dbReference type="PDB" id="7CV7"/>
    </source>
</evidence>
<evidence type="ECO:0007829" key="6">
    <source>
        <dbReference type="PDB" id="7CV8"/>
    </source>
</evidence>
<evidence type="ECO:0007829" key="7">
    <source>
        <dbReference type="PDB" id="7CV9"/>
    </source>
</evidence>
<evidence type="ECO:0007829" key="8">
    <source>
        <dbReference type="PDB" id="7DPE"/>
    </source>
</evidence>
<accession>Q8LFA9</accession>
<accession>Q8GYB7</accession>
<accession>Q9LN64</accession>
<reference key="1">
    <citation type="journal article" date="2000" name="Nature">
        <title>Sequence and analysis of chromosome 1 of the plant Arabidopsis thaliana.</title>
        <authorList>
            <person name="Theologis A."/>
            <person name="Ecker J.R."/>
            <person name="Palm C.J."/>
            <person name="Federspiel N.A."/>
            <person name="Kaul S."/>
            <person name="White O."/>
            <person name="Alonso J."/>
            <person name="Altafi H."/>
            <person name="Araujo R."/>
            <person name="Bowman C.L."/>
            <person name="Brooks S.Y."/>
            <person name="Buehler E."/>
            <person name="Chan A."/>
            <person name="Chao Q."/>
            <person name="Chen H."/>
            <person name="Cheuk R.F."/>
            <person name="Chin C.W."/>
            <person name="Chung M.K."/>
            <person name="Conn L."/>
            <person name="Conway A.B."/>
            <person name="Conway A.R."/>
            <person name="Creasy T.H."/>
            <person name="Dewar K."/>
            <person name="Dunn P."/>
            <person name="Etgu P."/>
            <person name="Feldblyum T.V."/>
            <person name="Feng J.-D."/>
            <person name="Fong B."/>
            <person name="Fujii C.Y."/>
            <person name="Gill J.E."/>
            <person name="Goldsmith A.D."/>
            <person name="Haas B."/>
            <person name="Hansen N.F."/>
            <person name="Hughes B."/>
            <person name="Huizar L."/>
            <person name="Hunter J.L."/>
            <person name="Jenkins J."/>
            <person name="Johnson-Hopson C."/>
            <person name="Khan S."/>
            <person name="Khaykin E."/>
            <person name="Kim C.J."/>
            <person name="Koo H.L."/>
            <person name="Kremenetskaia I."/>
            <person name="Kurtz D.B."/>
            <person name="Kwan A."/>
            <person name="Lam B."/>
            <person name="Langin-Hooper S."/>
            <person name="Lee A."/>
            <person name="Lee J.M."/>
            <person name="Lenz C.A."/>
            <person name="Li J.H."/>
            <person name="Li Y.-P."/>
            <person name="Lin X."/>
            <person name="Liu S.X."/>
            <person name="Liu Z.A."/>
            <person name="Luros J.S."/>
            <person name="Maiti R."/>
            <person name="Marziali A."/>
            <person name="Militscher J."/>
            <person name="Miranda M."/>
            <person name="Nguyen M."/>
            <person name="Nierman W.C."/>
            <person name="Osborne B.I."/>
            <person name="Pai G."/>
            <person name="Peterson J."/>
            <person name="Pham P.K."/>
            <person name="Rizzo M."/>
            <person name="Rooney T."/>
            <person name="Rowley D."/>
            <person name="Sakano H."/>
            <person name="Salzberg S.L."/>
            <person name="Schwartz J.R."/>
            <person name="Shinn P."/>
            <person name="Southwick A.M."/>
            <person name="Sun H."/>
            <person name="Tallon L.J."/>
            <person name="Tambunga G."/>
            <person name="Toriumi M.J."/>
            <person name="Town C.D."/>
            <person name="Utterback T."/>
            <person name="Van Aken S."/>
            <person name="Vaysberg M."/>
            <person name="Vysotskaia V.S."/>
            <person name="Walker M."/>
            <person name="Wu D."/>
            <person name="Yu G."/>
            <person name="Fraser C.M."/>
            <person name="Venter J.C."/>
            <person name="Davis R.W."/>
        </authorList>
    </citation>
    <scope>NUCLEOTIDE SEQUENCE [LARGE SCALE GENOMIC DNA]</scope>
    <source>
        <strain>cv. Columbia</strain>
    </source>
</reference>
<reference key="2">
    <citation type="journal article" date="2017" name="Plant J.">
        <title>Araport11: a complete reannotation of the Arabidopsis thaliana reference genome.</title>
        <authorList>
            <person name="Cheng C.Y."/>
            <person name="Krishnakumar V."/>
            <person name="Chan A.P."/>
            <person name="Thibaud-Nissen F."/>
            <person name="Schobel S."/>
            <person name="Town C.D."/>
        </authorList>
    </citation>
    <scope>GENOME REANNOTATION</scope>
    <source>
        <strain>cv. Columbia</strain>
    </source>
</reference>
<reference key="3">
    <citation type="submission" date="2002-03" db="EMBL/GenBank/DDBJ databases">
        <title>Full-length cDNA from Arabidopsis thaliana.</title>
        <authorList>
            <person name="Brover V.V."/>
            <person name="Troukhan M.E."/>
            <person name="Alexandrov N.A."/>
            <person name="Lu Y.-P."/>
            <person name="Flavell R.B."/>
            <person name="Feldmann K.A."/>
        </authorList>
    </citation>
    <scope>NUCLEOTIDE SEQUENCE [LARGE SCALE MRNA]</scope>
</reference>
<reference key="4">
    <citation type="journal article" date="2002" name="Science">
        <title>Functional annotation of a full-length Arabidopsis cDNA collection.</title>
        <authorList>
            <person name="Seki M."/>
            <person name="Narusaka M."/>
            <person name="Kamiya A."/>
            <person name="Ishida J."/>
            <person name="Satou M."/>
            <person name="Sakurai T."/>
            <person name="Nakajima M."/>
            <person name="Enju A."/>
            <person name="Akiyama K."/>
            <person name="Oono Y."/>
            <person name="Muramatsu M."/>
            <person name="Hayashizaki Y."/>
            <person name="Kawai J."/>
            <person name="Carninci P."/>
            <person name="Itoh M."/>
            <person name="Ishii Y."/>
            <person name="Arakawa T."/>
            <person name="Shibata K."/>
            <person name="Shinagawa A."/>
            <person name="Shinozaki K."/>
        </authorList>
    </citation>
    <scope>NUCLEOTIDE SEQUENCE [LARGE SCALE MRNA] OF 2-414</scope>
    <source>
        <strain>cv. Columbia</strain>
    </source>
</reference>
<protein>
    <recommendedName>
        <fullName>Methyltransferase-like protein 2</fullName>
        <ecNumber>2.1.1.-</ecNumber>
    </recommendedName>
</protein>
<sequence length="414" mass="47893">MAKTDKLAQFLDSGIYESDEFNWFFLDTVRITNRSYTRFKVSPSAYYSRFFNSKQLNQHSSESNPKKRKRKQKNSSFHLPSVGEQASNLRHQEARLFLSKAHESFLKEIELLSLTKGLSDDNDDDDSSLLNKCCDDEVSFIELGGVWQAPFYEITLSFNLHCDNEGESCNEQRVFQVFNNLVVNEIGEEVEAEFSNRRYIMPRNSCFYMSDLHHIRNLVPAKSEEGYNLIVIDPPWENASAHQKSKYPTLPNQYFLSLPIKQLAHAEGALVALWVTNREKLLSFVEKELFPAWGIKYVATMYWLKVKPDGTLICDLDLVHHKPYEYLLLGYHFTELAGSEKRSDFKLLDKNQIIMSIPGDFSRKPPIGDILLKHTPGSQPARCLELFAREMAAGWTSWGNEPLHFQDSRYFLKV</sequence>